<keyword id="KW-0408">Iron</keyword>
<keyword id="KW-0411">Iron-sulfur</keyword>
<keyword id="KW-0479">Metal-binding</keyword>
<keyword id="KW-1185">Reference proteome</keyword>
<keyword id="KW-0949">S-adenosyl-L-methionine</keyword>
<keyword id="KW-0808">Transferase</keyword>
<protein>
    <recommendedName>
        <fullName evidence="5">2-(3-amino-3-carboxypropyl)histidine synthase subunit 1</fullName>
        <ecNumber evidence="3">2.5.1.108</ecNumber>
    </recommendedName>
    <alternativeName>
        <fullName>Diphthamide biosynthesis protein 1</fullName>
    </alternativeName>
    <alternativeName>
        <fullName evidence="5">Diphtheria toxin resistance protein 1</fullName>
    </alternativeName>
    <alternativeName>
        <fullName evidence="5">S-adenosyl-L-methionine:L-histidine 3-amino-3-carboxypropyltransferase 1</fullName>
    </alternativeName>
</protein>
<accession>A7SLX5</accession>
<dbReference type="EC" id="2.5.1.108" evidence="3"/>
<dbReference type="EMBL" id="DS469703">
    <property type="protein sequence ID" value="EDO35280.1"/>
    <property type="molecule type" value="Genomic_DNA"/>
</dbReference>
<dbReference type="RefSeq" id="XP_001627380.1">
    <property type="nucleotide sequence ID" value="XM_001627330.1"/>
</dbReference>
<dbReference type="SMR" id="A7SLX5"/>
<dbReference type="FunCoup" id="A7SLX5">
    <property type="interactions" value="574"/>
</dbReference>
<dbReference type="STRING" id="45351.A7SLX5"/>
<dbReference type="EnsemblMetazoa" id="EDO35280">
    <property type="protein sequence ID" value="EDO35280"/>
    <property type="gene ID" value="NEMVEDRAFT_v1g246101"/>
</dbReference>
<dbReference type="eggNOG" id="KOG2648">
    <property type="taxonomic scope" value="Eukaryota"/>
</dbReference>
<dbReference type="HOGENOM" id="CLU_037146_1_1_1"/>
<dbReference type="InParanoid" id="A7SLX5"/>
<dbReference type="OMA" id="PGQVLGC"/>
<dbReference type="PhylomeDB" id="A7SLX5"/>
<dbReference type="UniPathway" id="UPA00559"/>
<dbReference type="Proteomes" id="UP000001593">
    <property type="component" value="Unassembled WGS sequence"/>
</dbReference>
<dbReference type="GO" id="GO:0120513">
    <property type="term" value="C:2-(3-amino-3-carboxypropyl)histidine synthase complex"/>
    <property type="evidence" value="ECO:0000250"/>
    <property type="project" value="UniProtKB"/>
</dbReference>
<dbReference type="GO" id="GO:0090560">
    <property type="term" value="F:2-(3-amino-3-carboxypropyl)histidine synthase activity"/>
    <property type="evidence" value="ECO:0007669"/>
    <property type="project" value="UniProtKB-EC"/>
</dbReference>
<dbReference type="GO" id="GO:0051539">
    <property type="term" value="F:4 iron, 4 sulfur cluster binding"/>
    <property type="evidence" value="ECO:0000250"/>
    <property type="project" value="UniProtKB"/>
</dbReference>
<dbReference type="GO" id="GO:0046872">
    <property type="term" value="F:metal ion binding"/>
    <property type="evidence" value="ECO:0007669"/>
    <property type="project" value="UniProtKB-KW"/>
</dbReference>
<dbReference type="GO" id="GO:0017183">
    <property type="term" value="P:protein histidyl modification to diphthamide"/>
    <property type="evidence" value="ECO:0000250"/>
    <property type="project" value="UniProtKB"/>
</dbReference>
<dbReference type="FunFam" id="3.40.50.11840:FF:000001">
    <property type="entry name" value="2-(3-amino-3-carboxypropyl)histidine synthase subunit 1"/>
    <property type="match status" value="1"/>
</dbReference>
<dbReference type="FunFam" id="3.40.50.11850:FF:000001">
    <property type="entry name" value="2-(3-amino-3-carboxypropyl)histidine synthase subunit 1"/>
    <property type="match status" value="1"/>
</dbReference>
<dbReference type="FunFam" id="3.40.50.11860:FF:000002">
    <property type="entry name" value="2-(3-amino-3-carboxypropyl)histidine synthase subunit 1"/>
    <property type="match status" value="1"/>
</dbReference>
<dbReference type="Gene3D" id="3.40.50.11840">
    <property type="entry name" value="Diphthamide synthesis DPH1/DPH2 domain 1"/>
    <property type="match status" value="1"/>
</dbReference>
<dbReference type="Gene3D" id="3.40.50.11850">
    <property type="entry name" value="Diphthamide synthesis DPH1/DPH2 domain 2"/>
    <property type="match status" value="1"/>
</dbReference>
<dbReference type="Gene3D" id="3.40.50.11860">
    <property type="entry name" value="Diphthamide synthesis DPH1/DPH2 domain 3"/>
    <property type="match status" value="1"/>
</dbReference>
<dbReference type="InterPro" id="IPR016435">
    <property type="entry name" value="DPH1/DPH2"/>
</dbReference>
<dbReference type="InterPro" id="IPR042263">
    <property type="entry name" value="DPH1/DPH2_1"/>
</dbReference>
<dbReference type="InterPro" id="IPR042264">
    <property type="entry name" value="DPH1/DPH2_2"/>
</dbReference>
<dbReference type="InterPro" id="IPR042265">
    <property type="entry name" value="DPH1/DPH2_3"/>
</dbReference>
<dbReference type="NCBIfam" id="TIGR00322">
    <property type="entry name" value="diphth2_R"/>
    <property type="match status" value="1"/>
</dbReference>
<dbReference type="PANTHER" id="PTHR10762:SF1">
    <property type="entry name" value="2-(3-AMINO-3-CARBOXYPROPYL)HISTIDINE SYNTHASE SUBUNIT 1"/>
    <property type="match status" value="1"/>
</dbReference>
<dbReference type="PANTHER" id="PTHR10762">
    <property type="entry name" value="DIPHTHAMIDE BIOSYNTHESIS PROTEIN"/>
    <property type="match status" value="1"/>
</dbReference>
<dbReference type="Pfam" id="PF01866">
    <property type="entry name" value="Diphthamide_syn"/>
    <property type="match status" value="1"/>
</dbReference>
<dbReference type="SFLD" id="SFLDS00032">
    <property type="entry name" value="Radical_SAM_3-amino-3-carboxyp"/>
    <property type="match status" value="1"/>
</dbReference>
<gene>
    <name type="primary">dph1</name>
    <name type="ORF">v1g246101</name>
</gene>
<name>DPH1_NEMVE</name>
<proteinExistence type="inferred from homology"/>
<organism>
    <name type="scientific">Nematostella vectensis</name>
    <name type="common">Starlet sea anemone</name>
    <dbReference type="NCBI Taxonomy" id="45351"/>
    <lineage>
        <taxon>Eukaryota</taxon>
        <taxon>Metazoa</taxon>
        <taxon>Cnidaria</taxon>
        <taxon>Anthozoa</taxon>
        <taxon>Hexacorallia</taxon>
        <taxon>Actiniaria</taxon>
        <taxon>Edwardsiidae</taxon>
        <taxon>Nematostella</taxon>
    </lineage>
</organism>
<feature type="chain" id="PRO_0000329957" description="2-(3-amino-3-carboxypropyl)histidine synthase subunit 1">
    <location>
        <begin position="1"/>
        <end position="465"/>
    </location>
</feature>
<feature type="region of interest" description="Disordered" evidence="4">
    <location>
        <begin position="1"/>
        <end position="42"/>
    </location>
</feature>
<feature type="region of interest" description="Disordered" evidence="4">
    <location>
        <begin position="442"/>
        <end position="465"/>
    </location>
</feature>
<feature type="compositionally biased region" description="Polar residues" evidence="4">
    <location>
        <begin position="1"/>
        <end position="14"/>
    </location>
</feature>
<feature type="compositionally biased region" description="Basic residues" evidence="4">
    <location>
        <begin position="15"/>
        <end position="25"/>
    </location>
</feature>
<feature type="compositionally biased region" description="Basic and acidic residues" evidence="4">
    <location>
        <begin position="454"/>
        <end position="465"/>
    </location>
</feature>
<feature type="binding site" evidence="1">
    <location>
        <position position="127"/>
    </location>
    <ligand>
        <name>[4Fe-4S] cluster</name>
        <dbReference type="ChEBI" id="CHEBI:49883"/>
    </ligand>
</feature>
<feature type="binding site" evidence="1">
    <location>
        <position position="230"/>
    </location>
    <ligand>
        <name>[4Fe-4S] cluster</name>
        <dbReference type="ChEBI" id="CHEBI:49883"/>
    </ligand>
</feature>
<feature type="binding site" evidence="1">
    <location>
        <position position="357"/>
    </location>
    <ligand>
        <name>[4Fe-4S] cluster</name>
        <dbReference type="ChEBI" id="CHEBI:49883"/>
    </ligand>
</feature>
<evidence type="ECO:0000250" key="1">
    <source>
        <dbReference type="UniProtKB" id="O58832"/>
    </source>
</evidence>
<evidence type="ECO:0000250" key="2">
    <source>
        <dbReference type="UniProtKB" id="P40487"/>
    </source>
</evidence>
<evidence type="ECO:0000250" key="3">
    <source>
        <dbReference type="UniProtKB" id="Q5NCQ5"/>
    </source>
</evidence>
<evidence type="ECO:0000256" key="4">
    <source>
        <dbReference type="SAM" id="MobiDB-lite"/>
    </source>
</evidence>
<evidence type="ECO:0000305" key="5"/>
<comment type="function">
    <text evidence="2 3">Catalyzes the first step of diphthamide biosynthesis, a post-translational modification of histidine which occurs in elongation factor 2 (By similarity). Dph1 and dph2 transfer a 3-amino-3-carboxypropyl (ACP) group from S-adenosyl-L-methionine (SAM) to a histidine residue, the reaction is assisted by a reduction system comprising dph3 and a NADH-dependent reductase (By similarity).</text>
</comment>
<comment type="catalytic activity">
    <reaction evidence="3">
        <text>L-histidyl-[translation elongation factor 2] + S-adenosyl-L-methionine = 2-[(3S)-amino-3-carboxypropyl]-L-histidyl-[translation elongation factor 2] + S-methyl-5'-thioadenosine + H(+)</text>
        <dbReference type="Rhea" id="RHEA:36783"/>
        <dbReference type="Rhea" id="RHEA-COMP:9748"/>
        <dbReference type="Rhea" id="RHEA-COMP:9749"/>
        <dbReference type="ChEBI" id="CHEBI:15378"/>
        <dbReference type="ChEBI" id="CHEBI:17509"/>
        <dbReference type="ChEBI" id="CHEBI:29979"/>
        <dbReference type="ChEBI" id="CHEBI:59789"/>
        <dbReference type="ChEBI" id="CHEBI:73995"/>
        <dbReference type="EC" id="2.5.1.108"/>
    </reaction>
</comment>
<comment type="cofactor">
    <cofactor evidence="2">
        <name>[4Fe-4S] cluster</name>
        <dbReference type="ChEBI" id="CHEBI:49883"/>
    </cofactor>
    <text evidence="2">Binds 1 [4Fe-4S] cluster per subunit. The cluster is coordinated with 3 cysteines and an exchangeable S-adenosyl-L-methionine.</text>
</comment>
<comment type="pathway">
    <text>Protein modification; peptidyl-diphthamide biosynthesis.</text>
</comment>
<comment type="subunit">
    <text evidence="2">Component of the 2-(3-amino-3-carboxypropyl)histidine synthase complex composed of dph1, dph2, dph3 and a NADH-dependent reductase.</text>
</comment>
<comment type="similarity">
    <text evidence="5">Belongs to the DPH1/DPH2 family. DPH1 subfamily.</text>
</comment>
<reference key="1">
    <citation type="journal article" date="2007" name="Science">
        <title>Sea anemone genome reveals ancestral eumetazoan gene repertoire and genomic organization.</title>
        <authorList>
            <person name="Putnam N.H."/>
            <person name="Srivastava M."/>
            <person name="Hellsten U."/>
            <person name="Dirks B."/>
            <person name="Chapman J."/>
            <person name="Salamov A."/>
            <person name="Terry A."/>
            <person name="Shapiro H."/>
            <person name="Lindquist E."/>
            <person name="Kapitonov V.V."/>
            <person name="Jurka J."/>
            <person name="Genikhovich G."/>
            <person name="Grigoriev I.V."/>
            <person name="Lucas S.M."/>
            <person name="Steele R.E."/>
            <person name="Finnerty J.R."/>
            <person name="Technau U."/>
            <person name="Martindale M.Q."/>
            <person name="Rokhsar D.S."/>
        </authorList>
    </citation>
    <scope>NUCLEOTIDE SEQUENCE [LARGE SCALE GENOMIC DNA]</scope>
    <source>
        <strain>CH2 X CH6</strain>
    </source>
</reference>
<sequence>MADSVEQSSVTTKRISAKGARKRFVGTKSASGKHSQGVDRVGSAAHRPVNQIPEEILKDTKLQEALPENYNFEIHKTIWRIQQVKAKRVALQFPEGLLLFACTIADILESFTGCETVIMGDVTYGACCVDDYSARALGCDLLVHYGHSCLVPIDATAGIKMLYVFVDIKIDTAHFVESVRFNLGAGSCLALVSTIQFVAALQAASNELSKDYQVEIPQCKPLSPGEILGCTAPMLKDKDAVIYLGDGRFHLEAVMIANPAIQAYRYDPYDKTFSKEYYDIDKMHEARQTAIKQASLASKYGLILGTLGRQGSPKVLQTLEKQLQSLNMDYIIVLLSEVFPDKLKLFKDVDAWVQVACPRLSIDWGTAFPKPLLSPYEASVALQSVAWQQSYPMDFYAYSSLGGWTPNNESNRPTPANRRKKNLHTEVIIDNVSDSKPVIKESECGSGETCCGKCTKETDKHSSTP</sequence>